<evidence type="ECO:0000255" key="1">
    <source>
        <dbReference type="HAMAP-Rule" id="MF_01314"/>
    </source>
</evidence>
<feature type="chain" id="PRO_1000141195" description="Anaerobic nitric oxide reductase transcription regulator NorR">
    <location>
        <begin position="1"/>
        <end position="516"/>
    </location>
</feature>
<feature type="domain" description="Sigma-54 factor interaction" evidence="1">
    <location>
        <begin position="187"/>
        <end position="416"/>
    </location>
</feature>
<feature type="DNA-binding region" description="H-T-H motif" evidence="1">
    <location>
        <begin position="482"/>
        <end position="501"/>
    </location>
</feature>
<feature type="binding site" evidence="1">
    <location>
        <begin position="215"/>
        <end position="222"/>
    </location>
    <ligand>
        <name>ATP</name>
        <dbReference type="ChEBI" id="CHEBI:30616"/>
    </ligand>
</feature>
<feature type="binding site" evidence="1">
    <location>
        <begin position="278"/>
        <end position="287"/>
    </location>
    <ligand>
        <name>ATP</name>
        <dbReference type="ChEBI" id="CHEBI:30616"/>
    </ligand>
</feature>
<feature type="modified residue" description="4-aspartylphosphate" evidence="1">
    <location>
        <position position="57"/>
    </location>
</feature>
<dbReference type="EMBL" id="CP000964">
    <property type="protein sequence ID" value="ACI09711.1"/>
    <property type="molecule type" value="Genomic_DNA"/>
</dbReference>
<dbReference type="SMR" id="B5XVA2"/>
<dbReference type="KEGG" id="kpe:KPK_1083"/>
<dbReference type="HOGENOM" id="CLU_000445_125_2_6"/>
<dbReference type="UniPathway" id="UPA00638"/>
<dbReference type="Proteomes" id="UP000001734">
    <property type="component" value="Chromosome"/>
</dbReference>
<dbReference type="GO" id="GO:0005524">
    <property type="term" value="F:ATP binding"/>
    <property type="evidence" value="ECO:0007669"/>
    <property type="project" value="UniProtKB-UniRule"/>
</dbReference>
<dbReference type="GO" id="GO:0016887">
    <property type="term" value="F:ATP hydrolysis activity"/>
    <property type="evidence" value="ECO:0007669"/>
    <property type="project" value="InterPro"/>
</dbReference>
<dbReference type="GO" id="GO:0003677">
    <property type="term" value="F:DNA binding"/>
    <property type="evidence" value="ECO:0007669"/>
    <property type="project" value="UniProtKB-KW"/>
</dbReference>
<dbReference type="GO" id="GO:0003700">
    <property type="term" value="F:DNA-binding transcription factor activity"/>
    <property type="evidence" value="ECO:0007669"/>
    <property type="project" value="UniProtKB-UniRule"/>
</dbReference>
<dbReference type="GO" id="GO:0000160">
    <property type="term" value="P:phosphorelay signal transduction system"/>
    <property type="evidence" value="ECO:0007669"/>
    <property type="project" value="UniProtKB-UniRule"/>
</dbReference>
<dbReference type="CDD" id="cd00009">
    <property type="entry name" value="AAA"/>
    <property type="match status" value="1"/>
</dbReference>
<dbReference type="FunFam" id="1.10.8.60:FF:000045">
    <property type="entry name" value="Anaerobic nitric oxide reductase transcription regulator NorR"/>
    <property type="match status" value="1"/>
</dbReference>
<dbReference type="FunFam" id="3.40.50.300:FF:000006">
    <property type="entry name" value="DNA-binding transcriptional regulator NtrC"/>
    <property type="match status" value="1"/>
</dbReference>
<dbReference type="Gene3D" id="1.10.8.60">
    <property type="match status" value="1"/>
</dbReference>
<dbReference type="Gene3D" id="3.30.450.40">
    <property type="match status" value="1"/>
</dbReference>
<dbReference type="Gene3D" id="1.10.10.60">
    <property type="entry name" value="Homeodomain-like"/>
    <property type="match status" value="1"/>
</dbReference>
<dbReference type="Gene3D" id="3.40.50.300">
    <property type="entry name" value="P-loop containing nucleotide triphosphate hydrolases"/>
    <property type="match status" value="1"/>
</dbReference>
<dbReference type="HAMAP" id="MF_01314">
    <property type="entry name" value="NorR"/>
    <property type="match status" value="1"/>
</dbReference>
<dbReference type="InterPro" id="IPR003593">
    <property type="entry name" value="AAA+_ATPase"/>
</dbReference>
<dbReference type="InterPro" id="IPR003018">
    <property type="entry name" value="GAF"/>
</dbReference>
<dbReference type="InterPro" id="IPR029016">
    <property type="entry name" value="GAF-like_dom_sf"/>
</dbReference>
<dbReference type="InterPro" id="IPR009057">
    <property type="entry name" value="Homeodomain-like_sf"/>
</dbReference>
<dbReference type="InterPro" id="IPR023944">
    <property type="entry name" value="NorR"/>
</dbReference>
<dbReference type="InterPro" id="IPR027417">
    <property type="entry name" value="P-loop_NTPase"/>
</dbReference>
<dbReference type="InterPro" id="IPR002078">
    <property type="entry name" value="Sigma_54_int"/>
</dbReference>
<dbReference type="InterPro" id="IPR025662">
    <property type="entry name" value="Sigma_54_int_dom_ATP-bd_1"/>
</dbReference>
<dbReference type="InterPro" id="IPR025943">
    <property type="entry name" value="Sigma_54_int_dom_ATP-bd_2"/>
</dbReference>
<dbReference type="InterPro" id="IPR025944">
    <property type="entry name" value="Sigma_54_int_dom_CS"/>
</dbReference>
<dbReference type="NCBIfam" id="NF003451">
    <property type="entry name" value="PRK05022.1"/>
    <property type="match status" value="1"/>
</dbReference>
<dbReference type="PANTHER" id="PTHR32071:SF35">
    <property type="entry name" value="ANAEROBIC NITRIC OXIDE REDUCTASE TRANSCRIPTION REGULATOR NORR"/>
    <property type="match status" value="1"/>
</dbReference>
<dbReference type="PANTHER" id="PTHR32071">
    <property type="entry name" value="TRANSCRIPTIONAL REGULATORY PROTEIN"/>
    <property type="match status" value="1"/>
</dbReference>
<dbReference type="Pfam" id="PF01590">
    <property type="entry name" value="GAF"/>
    <property type="match status" value="1"/>
</dbReference>
<dbReference type="Pfam" id="PF00158">
    <property type="entry name" value="Sigma54_activat"/>
    <property type="match status" value="1"/>
</dbReference>
<dbReference type="SMART" id="SM00382">
    <property type="entry name" value="AAA"/>
    <property type="match status" value="1"/>
</dbReference>
<dbReference type="SMART" id="SM00065">
    <property type="entry name" value="GAF"/>
    <property type="match status" value="1"/>
</dbReference>
<dbReference type="SUPFAM" id="SSF55781">
    <property type="entry name" value="GAF domain-like"/>
    <property type="match status" value="1"/>
</dbReference>
<dbReference type="SUPFAM" id="SSF46689">
    <property type="entry name" value="Homeodomain-like"/>
    <property type="match status" value="1"/>
</dbReference>
<dbReference type="SUPFAM" id="SSF52540">
    <property type="entry name" value="P-loop containing nucleoside triphosphate hydrolases"/>
    <property type="match status" value="1"/>
</dbReference>
<dbReference type="PROSITE" id="PS00675">
    <property type="entry name" value="SIGMA54_INTERACT_1"/>
    <property type="match status" value="1"/>
</dbReference>
<dbReference type="PROSITE" id="PS00676">
    <property type="entry name" value="SIGMA54_INTERACT_2"/>
    <property type="match status" value="1"/>
</dbReference>
<dbReference type="PROSITE" id="PS00688">
    <property type="entry name" value="SIGMA54_INTERACT_3"/>
    <property type="match status" value="1"/>
</dbReference>
<dbReference type="PROSITE" id="PS50045">
    <property type="entry name" value="SIGMA54_INTERACT_4"/>
    <property type="match status" value="1"/>
</dbReference>
<accession>B5XVA2</accession>
<reference key="1">
    <citation type="journal article" date="2008" name="PLoS Genet.">
        <title>Complete genome sequence of the N2-fixing broad host range endophyte Klebsiella pneumoniae 342 and virulence predictions verified in mice.</title>
        <authorList>
            <person name="Fouts D.E."/>
            <person name="Tyler H.L."/>
            <person name="DeBoy R.T."/>
            <person name="Daugherty S."/>
            <person name="Ren Q."/>
            <person name="Badger J.H."/>
            <person name="Durkin A.S."/>
            <person name="Huot H."/>
            <person name="Shrivastava S."/>
            <person name="Kothari S."/>
            <person name="Dodson R.J."/>
            <person name="Mohamoud Y."/>
            <person name="Khouri H."/>
            <person name="Roesch L.F.W."/>
            <person name="Krogfelt K.A."/>
            <person name="Struve C."/>
            <person name="Triplett E.W."/>
            <person name="Methe B.A."/>
        </authorList>
    </citation>
    <scope>NUCLEOTIDE SEQUENCE [LARGE SCALE GENOMIC DNA]</scope>
    <source>
        <strain>342</strain>
    </source>
</reference>
<sequence length="516" mass="56143">MSFSVDELARIAIDLQSDIGHTDRFSRLITTLRQILGCDASALLRYEAHQFVPLAIDGLAQDVLGRRFALEGHPRLEAIARAGDVVRFPADSDLPDPYDGLIPGHESLKVHACVGLPLFAGQTLIGALTLDGMDADRFDSFSDEELRLIAALVAGALNNALLIARLEAQNVLPVQPVNDAQPERQEIIGLSAPMLQLKKEIDIVAASDLNVLISGETGTGKELVAKAVHQGSPRAANPLVYLNCAALPESVAESELFGHVKGAFTGAISNRSGKFEMADNGTLFLDEIGELSLALQAKLLRVLQYGDIQRVGDDRSLRVDVRVLAATNRDLRQEVVEGRFRADLYHRLSVFPLSVPALRERENDVVLLAGYFCEQCRLRMGLARVILAEAARNRLQQWSWPGNVRELEHAIHRAVVLARATQAGDEVVLEPQHFQFAVAAPMLPTETAAAAPAIEKVNLREATDSFQREAISRALEANQRNWAATARALELDVANLHRLAKRLGLKGSPPGKNSAG</sequence>
<protein>
    <recommendedName>
        <fullName evidence="1">Anaerobic nitric oxide reductase transcription regulator NorR</fullName>
    </recommendedName>
</protein>
<keyword id="KW-0067">ATP-binding</keyword>
<keyword id="KW-0238">DNA-binding</keyword>
<keyword id="KW-0547">Nucleotide-binding</keyword>
<keyword id="KW-0597">Phosphoprotein</keyword>
<keyword id="KW-0804">Transcription</keyword>
<keyword id="KW-0805">Transcription regulation</keyword>
<comment type="function">
    <text evidence="1">Required for the expression of anaerobic nitric oxide (NO) reductase, acts as a transcriptional activator for at least the norVW operon. Activation also requires sigma-54.</text>
</comment>
<comment type="pathway">
    <text evidence="1">Nitrogen metabolism; nitric oxide reduction.</text>
</comment>
<organism>
    <name type="scientific">Klebsiella pneumoniae (strain 342)</name>
    <dbReference type="NCBI Taxonomy" id="507522"/>
    <lineage>
        <taxon>Bacteria</taxon>
        <taxon>Pseudomonadati</taxon>
        <taxon>Pseudomonadota</taxon>
        <taxon>Gammaproteobacteria</taxon>
        <taxon>Enterobacterales</taxon>
        <taxon>Enterobacteriaceae</taxon>
        <taxon>Klebsiella/Raoultella group</taxon>
        <taxon>Klebsiella</taxon>
        <taxon>Klebsiella pneumoniae complex</taxon>
    </lineage>
</organism>
<gene>
    <name evidence="1" type="primary">norR</name>
    <name type="ordered locus">KPK_1083</name>
</gene>
<name>NORR_KLEP3</name>
<proteinExistence type="inferred from homology"/>